<evidence type="ECO:0000255" key="1">
    <source>
        <dbReference type="HAMAP-Rule" id="MF_00008"/>
    </source>
</evidence>
<protein>
    <recommendedName>
        <fullName evidence="1">Thymidylate synthase</fullName>
        <shortName evidence="1">TS</shortName>
        <shortName evidence="1">TSase</shortName>
        <ecNumber evidence="1">2.1.1.45</ecNumber>
    </recommendedName>
</protein>
<reference key="1">
    <citation type="submission" date="2006-06" db="EMBL/GenBank/DDBJ databases">
        <title>Complete sequence of chromosome of Mycobacterium sp. MCS.</title>
        <authorList>
            <consortium name="US DOE Joint Genome Institute"/>
            <person name="Copeland A."/>
            <person name="Lucas S."/>
            <person name="Lapidus A."/>
            <person name="Barry K."/>
            <person name="Detter J.C."/>
            <person name="Glavina del Rio T."/>
            <person name="Hammon N."/>
            <person name="Israni S."/>
            <person name="Dalin E."/>
            <person name="Tice H."/>
            <person name="Pitluck S."/>
            <person name="Martinez M."/>
            <person name="Schmutz J."/>
            <person name="Larimer F."/>
            <person name="Land M."/>
            <person name="Hauser L."/>
            <person name="Kyrpides N."/>
            <person name="Kim E."/>
            <person name="Miller C.D."/>
            <person name="Hughes J.E."/>
            <person name="Anderson A.J."/>
            <person name="Sims R.C."/>
            <person name="Richardson P."/>
        </authorList>
    </citation>
    <scope>NUCLEOTIDE SEQUENCE [LARGE SCALE GENOMIC DNA]</scope>
    <source>
        <strain>MCS</strain>
    </source>
</reference>
<comment type="function">
    <text evidence="1">Catalyzes the reductive methylation of 2'-deoxyuridine-5'-monophosphate (dUMP) to 2'-deoxythymidine-5'-monophosphate (dTMP) while utilizing 5,10-methylenetetrahydrofolate (mTHF) as the methyl donor and reductant in the reaction, yielding dihydrofolate (DHF) as a by-product. This enzymatic reaction provides an intracellular de novo source of dTMP, an essential precursor for DNA biosynthesis.</text>
</comment>
<comment type="catalytic activity">
    <reaction evidence="1">
        <text>dUMP + (6R)-5,10-methylene-5,6,7,8-tetrahydrofolate = 7,8-dihydrofolate + dTMP</text>
        <dbReference type="Rhea" id="RHEA:12104"/>
        <dbReference type="ChEBI" id="CHEBI:15636"/>
        <dbReference type="ChEBI" id="CHEBI:57451"/>
        <dbReference type="ChEBI" id="CHEBI:63528"/>
        <dbReference type="ChEBI" id="CHEBI:246422"/>
        <dbReference type="EC" id="2.1.1.45"/>
    </reaction>
</comment>
<comment type="pathway">
    <text evidence="1">Pyrimidine metabolism; dTTP biosynthesis.</text>
</comment>
<comment type="subunit">
    <text evidence="1">Homodimer.</text>
</comment>
<comment type="subcellular location">
    <subcellularLocation>
        <location evidence="1">Cytoplasm</location>
    </subcellularLocation>
</comment>
<comment type="similarity">
    <text evidence="1">Belongs to the thymidylate synthase family. Bacterial-type ThyA subfamily.</text>
</comment>
<accession>Q1BA64</accession>
<keyword id="KW-0963">Cytoplasm</keyword>
<keyword id="KW-0489">Methyltransferase</keyword>
<keyword id="KW-0545">Nucleotide biosynthesis</keyword>
<keyword id="KW-0808">Transferase</keyword>
<sequence length="266" mass="30038">MPIPTPYEDLLRLVFERGTPKSDRTGTGTRSLFGHQMRYDLAAGFPLITTKKVHLKSVVYELLWFLRGESNVRWLQEHGVTIWDEWASETGELGPVYGVQWRSWPTPSGGHVDQISAAVDLLRTDPDSRRNIVSAWNVGEIPQMALPPCHAFFQFYVADGRLSCQLYQRSADLFLGVPFNIASYALLTHMMAAQAGLGVGEFVWTGGDCHIYDNHVEQVTEQLSRDPRPYPELVLAQRDSIFDYTYEDVVVKNYDPHPAIKAPVAV</sequence>
<dbReference type="EC" id="2.1.1.45" evidence="1"/>
<dbReference type="EMBL" id="CP000384">
    <property type="protein sequence ID" value="ABG08220.1"/>
    <property type="molecule type" value="Genomic_DNA"/>
</dbReference>
<dbReference type="SMR" id="Q1BA64"/>
<dbReference type="KEGG" id="mmc:Mmcs_2112"/>
<dbReference type="HOGENOM" id="CLU_021669_0_0_11"/>
<dbReference type="BioCyc" id="MSP164756:G1G6O-2158-MONOMER"/>
<dbReference type="UniPathway" id="UPA00575"/>
<dbReference type="GO" id="GO:0005829">
    <property type="term" value="C:cytosol"/>
    <property type="evidence" value="ECO:0007669"/>
    <property type="project" value="TreeGrafter"/>
</dbReference>
<dbReference type="GO" id="GO:0004799">
    <property type="term" value="F:thymidylate synthase activity"/>
    <property type="evidence" value="ECO:0007669"/>
    <property type="project" value="UniProtKB-UniRule"/>
</dbReference>
<dbReference type="GO" id="GO:0006231">
    <property type="term" value="P:dTMP biosynthetic process"/>
    <property type="evidence" value="ECO:0007669"/>
    <property type="project" value="UniProtKB-UniRule"/>
</dbReference>
<dbReference type="GO" id="GO:0006235">
    <property type="term" value="P:dTTP biosynthetic process"/>
    <property type="evidence" value="ECO:0007669"/>
    <property type="project" value="UniProtKB-UniRule"/>
</dbReference>
<dbReference type="GO" id="GO:0032259">
    <property type="term" value="P:methylation"/>
    <property type="evidence" value="ECO:0007669"/>
    <property type="project" value="UniProtKB-KW"/>
</dbReference>
<dbReference type="CDD" id="cd00351">
    <property type="entry name" value="TS_Pyrimidine_HMase"/>
    <property type="match status" value="1"/>
</dbReference>
<dbReference type="FunFam" id="3.30.572.10:FF:000001">
    <property type="entry name" value="Thymidylate synthase"/>
    <property type="match status" value="1"/>
</dbReference>
<dbReference type="Gene3D" id="3.30.572.10">
    <property type="entry name" value="Thymidylate synthase/dCMP hydroxymethylase domain"/>
    <property type="match status" value="1"/>
</dbReference>
<dbReference type="HAMAP" id="MF_00008">
    <property type="entry name" value="Thymidy_synth_bact"/>
    <property type="match status" value="1"/>
</dbReference>
<dbReference type="InterPro" id="IPR045097">
    <property type="entry name" value="Thymidate_synth/dCMP_Mease"/>
</dbReference>
<dbReference type="InterPro" id="IPR023451">
    <property type="entry name" value="Thymidate_synth/dCMP_Mease_dom"/>
</dbReference>
<dbReference type="InterPro" id="IPR036926">
    <property type="entry name" value="Thymidate_synth/dCMP_Mease_sf"/>
</dbReference>
<dbReference type="InterPro" id="IPR000398">
    <property type="entry name" value="Thymidylate_synthase"/>
</dbReference>
<dbReference type="InterPro" id="IPR020940">
    <property type="entry name" value="Thymidylate_synthase_AS"/>
</dbReference>
<dbReference type="NCBIfam" id="NF002497">
    <property type="entry name" value="PRK01827.1-3"/>
    <property type="match status" value="1"/>
</dbReference>
<dbReference type="NCBIfam" id="NF002499">
    <property type="entry name" value="PRK01827.1-5"/>
    <property type="match status" value="1"/>
</dbReference>
<dbReference type="NCBIfam" id="TIGR03284">
    <property type="entry name" value="thym_sym"/>
    <property type="match status" value="2"/>
</dbReference>
<dbReference type="PANTHER" id="PTHR11548:SF9">
    <property type="entry name" value="THYMIDYLATE SYNTHASE"/>
    <property type="match status" value="1"/>
</dbReference>
<dbReference type="PANTHER" id="PTHR11548">
    <property type="entry name" value="THYMIDYLATE SYNTHASE 1"/>
    <property type="match status" value="1"/>
</dbReference>
<dbReference type="Pfam" id="PF00303">
    <property type="entry name" value="Thymidylat_synt"/>
    <property type="match status" value="1"/>
</dbReference>
<dbReference type="PRINTS" id="PR00108">
    <property type="entry name" value="THYMDSNTHASE"/>
</dbReference>
<dbReference type="SUPFAM" id="SSF55831">
    <property type="entry name" value="Thymidylate synthase/dCMP hydroxymethylase"/>
    <property type="match status" value="1"/>
</dbReference>
<dbReference type="PROSITE" id="PS00091">
    <property type="entry name" value="THYMIDYLATE_SYNTHASE"/>
    <property type="match status" value="1"/>
</dbReference>
<feature type="chain" id="PRO_1000000633" description="Thymidylate synthase">
    <location>
        <begin position="1"/>
        <end position="266"/>
    </location>
</feature>
<feature type="active site" description="Nucleophile" evidence="1">
    <location>
        <position position="149"/>
    </location>
</feature>
<feature type="binding site" description="in other chain" evidence="1">
    <location>
        <position position="24"/>
    </location>
    <ligand>
        <name>dUMP</name>
        <dbReference type="ChEBI" id="CHEBI:246422"/>
        <note>ligand shared between dimeric partners</note>
    </ligand>
</feature>
<feature type="binding site" evidence="1">
    <location>
        <position position="54"/>
    </location>
    <ligand>
        <name>(6R)-5,10-methylene-5,6,7,8-tetrahydrofolate</name>
        <dbReference type="ChEBI" id="CHEBI:15636"/>
    </ligand>
</feature>
<feature type="binding site" evidence="1">
    <location>
        <begin position="129"/>
        <end position="130"/>
    </location>
    <ligand>
        <name>dUMP</name>
        <dbReference type="ChEBI" id="CHEBI:246422"/>
        <note>ligand shared between dimeric partners</note>
    </ligand>
</feature>
<feature type="binding site" description="in other chain" evidence="1">
    <location>
        <begin position="169"/>
        <end position="172"/>
    </location>
    <ligand>
        <name>dUMP</name>
        <dbReference type="ChEBI" id="CHEBI:246422"/>
        <note>ligand shared between dimeric partners</note>
    </ligand>
</feature>
<feature type="binding site" evidence="1">
    <location>
        <position position="172"/>
    </location>
    <ligand>
        <name>(6R)-5,10-methylene-5,6,7,8-tetrahydrofolate</name>
        <dbReference type="ChEBI" id="CHEBI:15636"/>
    </ligand>
</feature>
<feature type="binding site" description="in other chain" evidence="1">
    <location>
        <position position="180"/>
    </location>
    <ligand>
        <name>dUMP</name>
        <dbReference type="ChEBI" id="CHEBI:246422"/>
        <note>ligand shared between dimeric partners</note>
    </ligand>
</feature>
<feature type="binding site" description="in other chain" evidence="1">
    <location>
        <begin position="210"/>
        <end position="212"/>
    </location>
    <ligand>
        <name>dUMP</name>
        <dbReference type="ChEBI" id="CHEBI:246422"/>
        <note>ligand shared between dimeric partners</note>
    </ligand>
</feature>
<feature type="binding site" evidence="1">
    <location>
        <position position="265"/>
    </location>
    <ligand>
        <name>(6R)-5,10-methylene-5,6,7,8-tetrahydrofolate</name>
        <dbReference type="ChEBI" id="CHEBI:15636"/>
    </ligand>
</feature>
<name>TYSY_MYCSS</name>
<proteinExistence type="inferred from homology"/>
<gene>
    <name evidence="1" type="primary">thyA</name>
    <name type="ordered locus">Mmcs_2112</name>
</gene>
<organism>
    <name type="scientific">Mycobacterium sp. (strain MCS)</name>
    <dbReference type="NCBI Taxonomy" id="164756"/>
    <lineage>
        <taxon>Bacteria</taxon>
        <taxon>Bacillati</taxon>
        <taxon>Actinomycetota</taxon>
        <taxon>Actinomycetes</taxon>
        <taxon>Mycobacteriales</taxon>
        <taxon>Mycobacteriaceae</taxon>
        <taxon>Mycobacterium</taxon>
    </lineage>
</organism>